<comment type="function">
    <text evidence="4">Protease inhibitor with activity against cysteine, aspartic and serine proteases. Highest activity against serine proteases, in particular trypsin and trypsin-like proteases.</text>
</comment>
<comment type="biophysicochemical properties">
    <phDependence>
        <text>Stable at acidic pHs. Inhibitory activity is unaffected after 1 hour at pH 3.0 and 96 degrees Celsius. Inactivated after 1 hour at pH 10.7 and 96 degrees Celsius.</text>
    </phDependence>
</comment>
<comment type="subunit">
    <text evidence="3">Occurs as a monomer, dimer or trimer. The dimer may be the active form.</text>
</comment>
<comment type="PTM">
    <text evidence="3 5">Binds calcium, probably through His-3 to His-6.</text>
</comment>
<comment type="mass spectrometry"/>
<comment type="mass spectrometry"/>
<comment type="similarity">
    <text evidence="2">Belongs to the Bowman-Birk serine protease inhibitor family.</text>
</comment>
<evidence type="ECO:0000250" key="1">
    <source>
        <dbReference type="UniProtKB" id="P01055"/>
    </source>
</evidence>
<evidence type="ECO:0000255" key="2"/>
<evidence type="ECO:0000269" key="3">
    <source>
    </source>
</evidence>
<evidence type="ECO:0000269" key="4">
    <source ref="2"/>
</evidence>
<evidence type="ECO:0000303" key="5">
    <source>
    </source>
</evidence>
<evidence type="ECO:0000305" key="6"/>
<keyword id="KW-0106">Calcium</keyword>
<keyword id="KW-0903">Direct protein sequencing</keyword>
<keyword id="KW-1015">Disulfide bond</keyword>
<keyword id="KW-0646">Protease inhibitor</keyword>
<keyword id="KW-0722">Serine protease inhibitor</keyword>
<dbReference type="SMR" id="P83311"/>
<dbReference type="MEROPS" id="I12.001"/>
<dbReference type="GO" id="GO:0005576">
    <property type="term" value="C:extracellular region"/>
    <property type="evidence" value="ECO:0007669"/>
    <property type="project" value="InterPro"/>
</dbReference>
<dbReference type="GO" id="GO:0004867">
    <property type="term" value="F:serine-type endopeptidase inhibitor activity"/>
    <property type="evidence" value="ECO:0007669"/>
    <property type="project" value="UniProtKB-KW"/>
</dbReference>
<dbReference type="CDD" id="cd00023">
    <property type="entry name" value="BBI"/>
    <property type="match status" value="1"/>
</dbReference>
<dbReference type="Gene3D" id="2.10.69.10">
    <property type="entry name" value="Cysteine Protease (Bromelain) Inhibitor, subunit H"/>
    <property type="match status" value="1"/>
</dbReference>
<dbReference type="InterPro" id="IPR035995">
    <property type="entry name" value="Bowman-Birk_prot_inh"/>
</dbReference>
<dbReference type="InterPro" id="IPR000877">
    <property type="entry name" value="Prot_inh_BBI"/>
</dbReference>
<dbReference type="Pfam" id="PF00228">
    <property type="entry name" value="Bowman-Birk_leg"/>
    <property type="match status" value="1"/>
</dbReference>
<dbReference type="SMART" id="SM00269">
    <property type="entry name" value="BowB"/>
    <property type="match status" value="1"/>
</dbReference>
<dbReference type="SUPFAM" id="SSF57247">
    <property type="entry name" value="Bowman-Birk inhibitor, BBI"/>
    <property type="match status" value="1"/>
</dbReference>
<protein>
    <recommendedName>
        <fullName>Bowman-Birk type proteinase inhibitor</fullName>
    </recommendedName>
    <alternativeName>
        <fullName>TBPI-B</fullName>
    </alternativeName>
</protein>
<name>IBB_PHAAT</name>
<reference evidence="6" key="1">
    <citation type="journal article" date="2004" name="Plant Physiol. Biochem.">
        <title>Unusual structural characteristics and complete amino acid sequence of a protease inhibitor from Phaseolus acutifolius seeds.</title>
        <authorList>
            <person name="Campos J.E."/>
            <person name="Whitaker J.R."/>
            <person name="Yip T.-T."/>
            <person name="Hutchens T.W."/>
            <person name="Blanco-Labra A."/>
        </authorList>
    </citation>
    <scope>PROTEIN SEQUENCE</scope>
    <scope>SUBUNIT</scope>
    <scope>CALCIUM-BINDING</scope>
    <scope>MASS SPECTROMETRY</scope>
    <source>
        <tissue evidence="3">Seed</tissue>
    </source>
</reference>
<reference evidence="6" key="2">
    <citation type="journal article" date="1997" name="J. Food Biochem.">
        <title>Purification and partial characterization of a proteinase inhibitor from tepary bean (Phaseolus acutifolius) seeds.</title>
        <authorList>
            <person name="Campos J.E."/>
            <person name="Martinez-Gallardo N."/>
            <person name="Mendiola-Olaya E."/>
            <person name="Blanco-Labra A."/>
        </authorList>
        <dbReference type="AGRICOLA" id="IND21635738"/>
    </citation>
    <scope>FUNCTION</scope>
    <scope>STABILITY</scope>
    <source>
        <tissue evidence="4">Seed</tissue>
    </source>
</reference>
<accession>P83311</accession>
<proteinExistence type="evidence at protein level"/>
<organism>
    <name type="scientific">Phaseolus acutifolius</name>
    <name type="common">Tepary bean</name>
    <dbReference type="NCBI Taxonomy" id="33129"/>
    <lineage>
        <taxon>Eukaryota</taxon>
        <taxon>Viridiplantae</taxon>
        <taxon>Streptophyta</taxon>
        <taxon>Embryophyta</taxon>
        <taxon>Tracheophyta</taxon>
        <taxon>Spermatophyta</taxon>
        <taxon>Magnoliopsida</taxon>
        <taxon>eudicotyledons</taxon>
        <taxon>Gunneridae</taxon>
        <taxon>Pentapetalae</taxon>
        <taxon>rosids</taxon>
        <taxon>fabids</taxon>
        <taxon>Fabales</taxon>
        <taxon>Fabaceae</taxon>
        <taxon>Papilionoideae</taxon>
        <taxon>50 kb inversion clade</taxon>
        <taxon>NPAAA clade</taxon>
        <taxon>indigoferoid/millettioid clade</taxon>
        <taxon>Phaseoleae</taxon>
        <taxon>Phaseolus</taxon>
    </lineage>
</organism>
<sequence>SGHHHHDSSDEPSESSKACCDHCACTKSIPPQCRCALRLNCNHCRSCICTFSIPAQCVCTDTNDFCYEPCKSGHDDDDSG</sequence>
<feature type="chain" id="PRO_0000105848" description="Bowman-Birk type proteinase inhibitor">
    <location>
        <begin position="1"/>
        <end position="80"/>
    </location>
</feature>
<feature type="site" description="Reactive bond for trypsin" evidence="1">
    <location>
        <begin position="27"/>
        <end position="28"/>
    </location>
</feature>
<feature type="site" description="Reactive bond for chymotrypsin" evidence="1">
    <location>
        <begin position="51"/>
        <end position="52"/>
    </location>
</feature>
<feature type="disulfide bond" evidence="1">
    <location>
        <begin position="19"/>
        <end position="70"/>
    </location>
</feature>
<feature type="disulfide bond" evidence="1">
    <location>
        <begin position="20"/>
        <end position="35"/>
    </location>
</feature>
<feature type="disulfide bond" evidence="1">
    <location>
        <begin position="23"/>
        <end position="66"/>
    </location>
</feature>
<feature type="disulfide bond" evidence="1">
    <location>
        <begin position="25"/>
        <end position="33"/>
    </location>
</feature>
<feature type="disulfide bond" evidence="1">
    <location>
        <begin position="41"/>
        <end position="47"/>
    </location>
</feature>
<feature type="disulfide bond" evidence="1">
    <location>
        <begin position="44"/>
        <end position="59"/>
    </location>
</feature>
<feature type="disulfide bond" evidence="1">
    <location>
        <begin position="49"/>
        <end position="57"/>
    </location>
</feature>